<organism>
    <name type="scientific">Pyricularia oryzae (strain 70-15 / ATCC MYA-4617 / FGSC 8958)</name>
    <name type="common">Rice blast fungus</name>
    <name type="synonym">Magnaporthe oryzae</name>
    <dbReference type="NCBI Taxonomy" id="242507"/>
    <lineage>
        <taxon>Eukaryota</taxon>
        <taxon>Fungi</taxon>
        <taxon>Dikarya</taxon>
        <taxon>Ascomycota</taxon>
        <taxon>Pezizomycotina</taxon>
        <taxon>Sordariomycetes</taxon>
        <taxon>Sordariomycetidae</taxon>
        <taxon>Magnaporthales</taxon>
        <taxon>Pyriculariaceae</taxon>
        <taxon>Pyricularia</taxon>
    </lineage>
</organism>
<reference key="1">
    <citation type="submission" date="2005-01" db="EMBL/GenBank/DDBJ databases">
        <title>The sequence of Magnaporthe grisea chromosome 7.</title>
        <authorList>
            <person name="Thon M.R."/>
            <person name="Pan H."/>
            <person name="Diener A."/>
            <person name="Papalas J."/>
            <person name="Taro A."/>
            <person name="Mitchell T."/>
            <person name="Dean R.A."/>
        </authorList>
    </citation>
    <scope>NUCLEOTIDE SEQUENCE [LARGE SCALE GENOMIC DNA]</scope>
    <source>
        <strain>70-15 / ATCC MYA-4617 / FGSC 8958</strain>
    </source>
</reference>
<reference key="2">
    <citation type="journal article" date="2005" name="Nature">
        <title>The genome sequence of the rice blast fungus Magnaporthe grisea.</title>
        <authorList>
            <person name="Dean R.A."/>
            <person name="Talbot N.J."/>
            <person name="Ebbole D.J."/>
            <person name="Farman M.L."/>
            <person name="Mitchell T.K."/>
            <person name="Orbach M.J."/>
            <person name="Thon M.R."/>
            <person name="Kulkarni R."/>
            <person name="Xu J.-R."/>
            <person name="Pan H."/>
            <person name="Read N.D."/>
            <person name="Lee Y.-H."/>
            <person name="Carbone I."/>
            <person name="Brown D."/>
            <person name="Oh Y.Y."/>
            <person name="Donofrio N."/>
            <person name="Jeong J.S."/>
            <person name="Soanes D.M."/>
            <person name="Djonovic S."/>
            <person name="Kolomiets E."/>
            <person name="Rehmeyer C."/>
            <person name="Li W."/>
            <person name="Harding M."/>
            <person name="Kim S."/>
            <person name="Lebrun M.-H."/>
            <person name="Bohnert H."/>
            <person name="Coughlan S."/>
            <person name="Butler J."/>
            <person name="Calvo S.E."/>
            <person name="Ma L.-J."/>
            <person name="Nicol R."/>
            <person name="Purcell S."/>
            <person name="Nusbaum C."/>
            <person name="Galagan J.E."/>
            <person name="Birren B.W."/>
        </authorList>
    </citation>
    <scope>NUCLEOTIDE SEQUENCE [LARGE SCALE GENOMIC DNA]</scope>
    <source>
        <strain>70-15 / ATCC MYA-4617 / FGSC 8958</strain>
    </source>
</reference>
<keyword id="KW-0165">Cleavage on pair of basic residues</keyword>
<keyword id="KW-1015">Disulfide bond</keyword>
<keyword id="KW-0378">Hydrolase</keyword>
<keyword id="KW-0479">Metal-binding</keyword>
<keyword id="KW-0482">Metalloprotease</keyword>
<keyword id="KW-0645">Protease</keyword>
<keyword id="KW-1185">Reference proteome</keyword>
<keyword id="KW-0964">Secreted</keyword>
<keyword id="KW-0732">Signal</keyword>
<keyword id="KW-0862">Zinc</keyword>
<keyword id="KW-0865">Zymogen</keyword>
<name>NPIIA_PYRO7</name>
<feature type="signal peptide" evidence="2">
    <location>
        <begin position="1"/>
        <end position="19"/>
    </location>
</feature>
<feature type="propeptide" id="PRO_0000407104" evidence="1">
    <location>
        <begin position="20"/>
        <end position="176"/>
    </location>
</feature>
<feature type="chain" id="PRO_0000407105" description="Neutral protease 2 homolog MGG_10927">
    <location>
        <begin position="177"/>
        <end position="347"/>
    </location>
</feature>
<feature type="active site" evidence="3">
    <location>
        <position position="300"/>
    </location>
</feature>
<feature type="binding site" evidence="3">
    <location>
        <position position="299"/>
    </location>
    <ligand>
        <name>Zn(2+)</name>
        <dbReference type="ChEBI" id="CHEBI:29105"/>
        <note>catalytic</note>
    </ligand>
</feature>
<feature type="binding site" evidence="3">
    <location>
        <position position="303"/>
    </location>
    <ligand>
        <name>Zn(2+)</name>
        <dbReference type="ChEBI" id="CHEBI:29105"/>
        <note>catalytic</note>
    </ligand>
</feature>
<feature type="disulfide bond" evidence="1">
    <location>
        <begin position="180"/>
        <end position="250"/>
    </location>
</feature>
<feature type="disulfide bond" evidence="1">
    <location>
        <begin position="257"/>
        <end position="275"/>
    </location>
</feature>
<evidence type="ECO:0000250" key="1"/>
<evidence type="ECO:0000255" key="2"/>
<evidence type="ECO:0000255" key="3">
    <source>
        <dbReference type="PROSITE-ProRule" id="PRU10095"/>
    </source>
</evidence>
<evidence type="ECO:0000305" key="4"/>
<dbReference type="EC" id="3.4.24.39"/>
<dbReference type="EMBL" id="CM000230">
    <property type="protein sequence ID" value="EAQ70750.1"/>
    <property type="molecule type" value="Genomic_DNA"/>
</dbReference>
<dbReference type="EMBL" id="JH165176">
    <property type="status" value="NOT_ANNOTATED_CDS"/>
    <property type="molecule type" value="Genomic_DNA"/>
</dbReference>
<dbReference type="RefSeq" id="XP_016845997.1">
    <property type="nucleotide sequence ID" value="XM_016990527.1"/>
</dbReference>
<dbReference type="SMR" id="Q2KH28"/>
<dbReference type="STRING" id="242507.Q2KH28"/>
<dbReference type="EnsemblFungi" id="MGG_10927T0">
    <property type="protein sequence ID" value="MGG_10927T0"/>
    <property type="gene ID" value="MGG_10927"/>
</dbReference>
<dbReference type="GeneID" id="2677075"/>
<dbReference type="KEGG" id="mgr:MGG_10927"/>
<dbReference type="VEuPathDB" id="FungiDB:MGG_10927"/>
<dbReference type="eggNOG" id="ENOG502SGF5">
    <property type="taxonomic scope" value="Eukaryota"/>
</dbReference>
<dbReference type="HOGENOM" id="CLU_039313_0_0_1"/>
<dbReference type="InParanoid" id="Q2KH28"/>
<dbReference type="OMA" id="ANCDLYY"/>
<dbReference type="OrthoDB" id="412874at2759"/>
<dbReference type="Proteomes" id="UP000009058">
    <property type="component" value="Unassembled WGS sequence"/>
</dbReference>
<dbReference type="GO" id="GO:0005576">
    <property type="term" value="C:extracellular region"/>
    <property type="evidence" value="ECO:0007669"/>
    <property type="project" value="UniProtKB-SubCell"/>
</dbReference>
<dbReference type="GO" id="GO:0046872">
    <property type="term" value="F:metal ion binding"/>
    <property type="evidence" value="ECO:0007669"/>
    <property type="project" value="UniProtKB-KW"/>
</dbReference>
<dbReference type="GO" id="GO:0004222">
    <property type="term" value="F:metalloendopeptidase activity"/>
    <property type="evidence" value="ECO:0007669"/>
    <property type="project" value="InterPro"/>
</dbReference>
<dbReference type="GO" id="GO:0006508">
    <property type="term" value="P:proteolysis"/>
    <property type="evidence" value="ECO:0007669"/>
    <property type="project" value="UniProtKB-KW"/>
</dbReference>
<dbReference type="CDD" id="cd11008">
    <property type="entry name" value="M35_deuterolysin_like"/>
    <property type="match status" value="1"/>
</dbReference>
<dbReference type="Gene3D" id="2.60.40.2970">
    <property type="match status" value="1"/>
</dbReference>
<dbReference type="Gene3D" id="3.40.390.10">
    <property type="entry name" value="Collagenase (Catalytic Domain)"/>
    <property type="match status" value="1"/>
</dbReference>
<dbReference type="InterPro" id="IPR050414">
    <property type="entry name" value="Fungal_M35_metalloproteases"/>
</dbReference>
<dbReference type="InterPro" id="IPR029463">
    <property type="entry name" value="Lys_MEP"/>
</dbReference>
<dbReference type="InterPro" id="IPR024079">
    <property type="entry name" value="MetalloPept_cat_dom_sf"/>
</dbReference>
<dbReference type="InterPro" id="IPR001384">
    <property type="entry name" value="Peptidase_M35"/>
</dbReference>
<dbReference type="PANTHER" id="PTHR37016">
    <property type="match status" value="1"/>
</dbReference>
<dbReference type="PANTHER" id="PTHR37016:SF2">
    <property type="entry name" value="NEUTRAL PROTEASE 2 HOMOLOG SNOG_02177"/>
    <property type="match status" value="1"/>
</dbReference>
<dbReference type="Pfam" id="PF02102">
    <property type="entry name" value="Peptidase_M35"/>
    <property type="match status" value="1"/>
</dbReference>
<dbReference type="PRINTS" id="PR00768">
    <property type="entry name" value="DEUTEROLYSIN"/>
</dbReference>
<dbReference type="SMART" id="SM01351">
    <property type="entry name" value="Aspzincin_M35"/>
    <property type="match status" value="1"/>
</dbReference>
<dbReference type="SUPFAM" id="SSF55486">
    <property type="entry name" value="Metalloproteases ('zincins'), catalytic domain"/>
    <property type="match status" value="1"/>
</dbReference>
<dbReference type="PROSITE" id="PS00142">
    <property type="entry name" value="ZINC_PROTEASE"/>
    <property type="match status" value="1"/>
</dbReference>
<protein>
    <recommendedName>
        <fullName>Neutral protease 2 homolog MGG_10927</fullName>
        <ecNumber>3.4.24.39</ecNumber>
    </recommendedName>
    <alternativeName>
        <fullName>Deuterolysin MGG_10927</fullName>
    </alternativeName>
</protein>
<gene>
    <name type="ORF">MGCH7_ch7g157</name>
    <name type="ORF">MGG_10927</name>
</gene>
<proteinExistence type="inferred from homology"/>
<sequence>MKYSVGITALLATLAQGAAVMSKRDIPLDVKIQVVNNSEVKASITNSGSSSIKVVKTGSILDSADVEKSVIMAGENKVAFDGIRYQVATAGLPAEAFQIIEAGETIEVSFNVASTHDFAQGGDFDIAALGTFSVAESDSGDIFSAMAFESNHIKAHIDGTEAAKVRRSYLAKRTMVQSDCTGTRLTQTTNAINSCRSLAQRAASAAQSNSAKMNEYFKSTSSSAVNTVVTTFNRIASECNPSGGASRQYCTDQIGACSPGVIAYTVPSQSIMVNCPTFFTMPTTSNACRAQTQDNTILHEVTHLSQVKGTQDYNCYGYTCMRQLTSAQNLNHADTYTLFAQAIKVGC</sequence>
<accession>Q2KH28</accession>
<accession>A4RCX3</accession>
<comment type="function">
    <text evidence="1">Secreted metalloproteinase that allows assimilation of proteinaceous substrates. Shows high activities on basic nuclear substrates such as histone and protamine (By similarity).</text>
</comment>
<comment type="catalytic activity">
    <reaction>
        <text>Preferential cleavage of bonds with hydrophobic residues in P1'. Also 3-Asn-|-Gln-4 and 8-Gly-|-Ser-9 bonds in insulin B chain.</text>
        <dbReference type="EC" id="3.4.24.39"/>
    </reaction>
</comment>
<comment type="cofactor">
    <cofactor evidence="1">
        <name>Zn(2+)</name>
        <dbReference type="ChEBI" id="CHEBI:29105"/>
    </cofactor>
    <text evidence="1">Binds 1 zinc ion per subunit.</text>
</comment>
<comment type="subcellular location">
    <subcellularLocation>
        <location evidence="1">Secreted</location>
    </subcellularLocation>
</comment>
<comment type="similarity">
    <text evidence="4">Belongs to the peptidase M35 family.</text>
</comment>